<sequence>MLCIIIIENMERVCEFCKAYRAVVYCIADTANLCLTCDAKVHSANSLSGRHLRTVLCDSCKNQPCVVRCFDHKMFLCHGCNDKFHGGGSSEHRRRDLRCYTGCPPAKDFAVMWGFRVMDDDDDVSLEQSFRMVKPKVQREGGFILEQILELEKVQLREENGSSSLTERGDPSPLELPKKPEEQLIDLPQTGKELVVDFSHLSSSSTLGDSFWECKSPYNKNNQLWHQNIQDIGVCEDTICSDDDFQIPDIDLTFRNFEEQFGADPEPIADSNNVFFVSSLDKSHEMKTFSSSFNNPIFAPKPASSTISFSSSETDNPYSHSEEVISFCPSLSNNTRQKVITRLKEKKRARVEEKKA</sequence>
<proteinExistence type="evidence at transcript level"/>
<protein>
    <recommendedName>
        <fullName>Putative zinc finger protein At1g68190</fullName>
    </recommendedName>
</protein>
<name>COLX_ARATH</name>
<evidence type="ECO:0000255" key="1">
    <source>
        <dbReference type="PROSITE-ProRule" id="PRU00024"/>
    </source>
</evidence>
<evidence type="ECO:0000256" key="2">
    <source>
        <dbReference type="SAM" id="MobiDB-lite"/>
    </source>
</evidence>
<evidence type="ECO:0000305" key="3"/>
<dbReference type="EMBL" id="AC016447">
    <property type="protein sequence ID" value="AAG52592.1"/>
    <property type="molecule type" value="Genomic_DNA"/>
</dbReference>
<dbReference type="EMBL" id="CP002684">
    <property type="protein sequence ID" value="AEE34762.1"/>
    <property type="molecule type" value="Genomic_DNA"/>
</dbReference>
<dbReference type="EMBL" id="CP002684">
    <property type="protein sequence ID" value="ANM59633.1"/>
    <property type="molecule type" value="Genomic_DNA"/>
</dbReference>
<dbReference type="EMBL" id="AK117800">
    <property type="protein sequence ID" value="BAC42445.1"/>
    <property type="molecule type" value="mRNA"/>
</dbReference>
<dbReference type="PIR" id="C96705">
    <property type="entry name" value="C96705"/>
</dbReference>
<dbReference type="SMR" id="Q9C9F4"/>
<dbReference type="BioGRID" id="28369">
    <property type="interactions" value="2"/>
</dbReference>
<dbReference type="FunCoup" id="Q9C9F4">
    <property type="interactions" value="565"/>
</dbReference>
<dbReference type="IntAct" id="Q9C9F4">
    <property type="interactions" value="3"/>
</dbReference>
<dbReference type="STRING" id="3702.Q9C9F4"/>
<dbReference type="PaxDb" id="3702-AT1G68190.1"/>
<dbReference type="EnsemblPlants" id="AT1G68190.1">
    <property type="protein sequence ID" value="AT1G68190.1"/>
    <property type="gene ID" value="AT1G68190"/>
</dbReference>
<dbReference type="EnsemblPlants" id="AT1G68190.3">
    <property type="protein sequence ID" value="AT1G68190.3"/>
    <property type="gene ID" value="AT1G68190"/>
</dbReference>
<dbReference type="GeneID" id="843148"/>
<dbReference type="Gramene" id="AT1G68190.1">
    <property type="protein sequence ID" value="AT1G68190.1"/>
    <property type="gene ID" value="AT1G68190"/>
</dbReference>
<dbReference type="Gramene" id="AT1G68190.3">
    <property type="protein sequence ID" value="AT1G68190.3"/>
    <property type="gene ID" value="AT1G68190"/>
</dbReference>
<dbReference type="KEGG" id="ath:AT1G68190"/>
<dbReference type="Araport" id="AT1G68190"/>
<dbReference type="TAIR" id="AT1G68190">
    <property type="gene designation" value="BBX27"/>
</dbReference>
<dbReference type="eggNOG" id="ENOG502QVZU">
    <property type="taxonomic scope" value="Eukaryota"/>
</dbReference>
<dbReference type="HOGENOM" id="CLU_028225_2_0_1"/>
<dbReference type="InParanoid" id="Q9C9F4"/>
<dbReference type="OMA" id="PIVYCKA"/>
<dbReference type="PhylomeDB" id="Q9C9F4"/>
<dbReference type="PRO" id="PR:Q9C9F4"/>
<dbReference type="Proteomes" id="UP000006548">
    <property type="component" value="Chromosome 1"/>
</dbReference>
<dbReference type="ExpressionAtlas" id="Q9C9F4">
    <property type="expression patterns" value="baseline and differential"/>
</dbReference>
<dbReference type="GO" id="GO:0005634">
    <property type="term" value="C:nucleus"/>
    <property type="evidence" value="ECO:0007669"/>
    <property type="project" value="UniProtKB-SubCell"/>
</dbReference>
<dbReference type="GO" id="GO:0003700">
    <property type="term" value="F:DNA-binding transcription factor activity"/>
    <property type="evidence" value="ECO:0000250"/>
    <property type="project" value="TAIR"/>
</dbReference>
<dbReference type="GO" id="GO:0008270">
    <property type="term" value="F:zinc ion binding"/>
    <property type="evidence" value="ECO:0007669"/>
    <property type="project" value="UniProtKB-KW"/>
</dbReference>
<dbReference type="GO" id="GO:0006355">
    <property type="term" value="P:regulation of DNA-templated transcription"/>
    <property type="evidence" value="ECO:0000304"/>
    <property type="project" value="TAIR"/>
</dbReference>
<dbReference type="CDD" id="cd19821">
    <property type="entry name" value="Bbox1_BBX-like"/>
    <property type="match status" value="2"/>
</dbReference>
<dbReference type="InterPro" id="IPR049808">
    <property type="entry name" value="CONSTANS-like_Bbox1"/>
</dbReference>
<dbReference type="InterPro" id="IPR000315">
    <property type="entry name" value="Znf_B-box"/>
</dbReference>
<dbReference type="PANTHER" id="PTHR31717:SF53">
    <property type="entry name" value="BNAA07G24720D PROTEIN"/>
    <property type="match status" value="1"/>
</dbReference>
<dbReference type="PANTHER" id="PTHR31717">
    <property type="entry name" value="ZINC FINGER PROTEIN CONSTANS-LIKE 10"/>
    <property type="match status" value="1"/>
</dbReference>
<dbReference type="SMART" id="SM00336">
    <property type="entry name" value="BBOX"/>
    <property type="match status" value="2"/>
</dbReference>
<dbReference type="PROSITE" id="PS50119">
    <property type="entry name" value="ZF_BBOX"/>
    <property type="match status" value="2"/>
</dbReference>
<comment type="subcellular location">
    <subcellularLocation>
        <location evidence="3">Nucleus</location>
    </subcellularLocation>
</comment>
<comment type="similarity">
    <text evidence="3">Belongs to the CONSTANS family.</text>
</comment>
<comment type="caution">
    <text evidence="3">Lacks the conserved CCT domain, which is one of the features of the CONSTANS family.</text>
</comment>
<feature type="chain" id="PRO_0000113294" description="Putative zinc finger protein At1g68190">
    <location>
        <begin position="1"/>
        <end position="356"/>
    </location>
</feature>
<feature type="zinc finger region" description="B box-type 1; atypical" evidence="1">
    <location>
        <begin position="14"/>
        <end position="56"/>
    </location>
</feature>
<feature type="zinc finger region" description="B box-type 2; atypical" evidence="1">
    <location>
        <begin position="57"/>
        <end position="97"/>
    </location>
</feature>
<feature type="region of interest" description="Disordered" evidence="2">
    <location>
        <begin position="159"/>
        <end position="178"/>
    </location>
</feature>
<feature type="binding site" evidence="1">
    <location>
        <position position="14"/>
    </location>
    <ligand>
        <name>Zn(2+)</name>
        <dbReference type="ChEBI" id="CHEBI:29105"/>
        <label>1</label>
    </ligand>
</feature>
<feature type="binding site" evidence="1">
    <location>
        <position position="17"/>
    </location>
    <ligand>
        <name>Zn(2+)</name>
        <dbReference type="ChEBI" id="CHEBI:29105"/>
        <label>1</label>
    </ligand>
</feature>
<feature type="binding site" evidence="1">
    <location>
        <position position="37"/>
    </location>
    <ligand>
        <name>Zn(2+)</name>
        <dbReference type="ChEBI" id="CHEBI:29105"/>
        <label>1</label>
    </ligand>
</feature>
<feature type="binding site" evidence="1">
    <location>
        <position position="42"/>
    </location>
    <ligand>
        <name>Zn(2+)</name>
        <dbReference type="ChEBI" id="CHEBI:29105"/>
        <label>1</label>
    </ligand>
</feature>
<feature type="binding site" evidence="1">
    <location>
        <position position="57"/>
    </location>
    <ligand>
        <name>Zn(2+)</name>
        <dbReference type="ChEBI" id="CHEBI:29105"/>
        <label>2</label>
    </ligand>
</feature>
<feature type="binding site" evidence="1">
    <location>
        <position position="60"/>
    </location>
    <ligand>
        <name>Zn(2+)</name>
        <dbReference type="ChEBI" id="CHEBI:29105"/>
        <label>2</label>
    </ligand>
</feature>
<feature type="binding site" evidence="1">
    <location>
        <position position="80"/>
    </location>
    <ligand>
        <name>Zn(2+)</name>
        <dbReference type="ChEBI" id="CHEBI:29105"/>
        <label>2</label>
    </ligand>
</feature>
<feature type="binding site" evidence="1">
    <location>
        <position position="85"/>
    </location>
    <ligand>
        <name>Zn(2+)</name>
        <dbReference type="ChEBI" id="CHEBI:29105"/>
        <label>2</label>
    </ligand>
</feature>
<feature type="sequence conflict" description="In Ref. 3; BAC42445." evidence="3" ref="3">
    <original>I</original>
    <variation>F</variation>
    <location>
        <position position="250"/>
    </location>
</feature>
<accession>Q9C9F4</accession>
<accession>Q8GY83</accession>
<reference key="1">
    <citation type="journal article" date="2000" name="Nature">
        <title>Sequence and analysis of chromosome 1 of the plant Arabidopsis thaliana.</title>
        <authorList>
            <person name="Theologis A."/>
            <person name="Ecker J.R."/>
            <person name="Palm C.J."/>
            <person name="Federspiel N.A."/>
            <person name="Kaul S."/>
            <person name="White O."/>
            <person name="Alonso J."/>
            <person name="Altafi H."/>
            <person name="Araujo R."/>
            <person name="Bowman C.L."/>
            <person name="Brooks S.Y."/>
            <person name="Buehler E."/>
            <person name="Chan A."/>
            <person name="Chao Q."/>
            <person name="Chen H."/>
            <person name="Cheuk R.F."/>
            <person name="Chin C.W."/>
            <person name="Chung M.K."/>
            <person name="Conn L."/>
            <person name="Conway A.B."/>
            <person name="Conway A.R."/>
            <person name="Creasy T.H."/>
            <person name="Dewar K."/>
            <person name="Dunn P."/>
            <person name="Etgu P."/>
            <person name="Feldblyum T.V."/>
            <person name="Feng J.-D."/>
            <person name="Fong B."/>
            <person name="Fujii C.Y."/>
            <person name="Gill J.E."/>
            <person name="Goldsmith A.D."/>
            <person name="Haas B."/>
            <person name="Hansen N.F."/>
            <person name="Hughes B."/>
            <person name="Huizar L."/>
            <person name="Hunter J.L."/>
            <person name="Jenkins J."/>
            <person name="Johnson-Hopson C."/>
            <person name="Khan S."/>
            <person name="Khaykin E."/>
            <person name="Kim C.J."/>
            <person name="Koo H.L."/>
            <person name="Kremenetskaia I."/>
            <person name="Kurtz D.B."/>
            <person name="Kwan A."/>
            <person name="Lam B."/>
            <person name="Langin-Hooper S."/>
            <person name="Lee A."/>
            <person name="Lee J.M."/>
            <person name="Lenz C.A."/>
            <person name="Li J.H."/>
            <person name="Li Y.-P."/>
            <person name="Lin X."/>
            <person name="Liu S.X."/>
            <person name="Liu Z.A."/>
            <person name="Luros J.S."/>
            <person name="Maiti R."/>
            <person name="Marziali A."/>
            <person name="Militscher J."/>
            <person name="Miranda M."/>
            <person name="Nguyen M."/>
            <person name="Nierman W.C."/>
            <person name="Osborne B.I."/>
            <person name="Pai G."/>
            <person name="Peterson J."/>
            <person name="Pham P.K."/>
            <person name="Rizzo M."/>
            <person name="Rooney T."/>
            <person name="Rowley D."/>
            <person name="Sakano H."/>
            <person name="Salzberg S.L."/>
            <person name="Schwartz J.R."/>
            <person name="Shinn P."/>
            <person name="Southwick A.M."/>
            <person name="Sun H."/>
            <person name="Tallon L.J."/>
            <person name="Tambunga G."/>
            <person name="Toriumi M.J."/>
            <person name="Town C.D."/>
            <person name="Utterback T."/>
            <person name="Van Aken S."/>
            <person name="Vaysberg M."/>
            <person name="Vysotskaia V.S."/>
            <person name="Walker M."/>
            <person name="Wu D."/>
            <person name="Yu G."/>
            <person name="Fraser C.M."/>
            <person name="Venter J.C."/>
            <person name="Davis R.W."/>
        </authorList>
    </citation>
    <scope>NUCLEOTIDE SEQUENCE [LARGE SCALE GENOMIC DNA]</scope>
    <source>
        <strain>cv. Columbia</strain>
    </source>
</reference>
<reference key="2">
    <citation type="journal article" date="2017" name="Plant J.">
        <title>Araport11: a complete reannotation of the Arabidopsis thaliana reference genome.</title>
        <authorList>
            <person name="Cheng C.Y."/>
            <person name="Krishnakumar V."/>
            <person name="Chan A.P."/>
            <person name="Thibaud-Nissen F."/>
            <person name="Schobel S."/>
            <person name="Town C.D."/>
        </authorList>
    </citation>
    <scope>GENOME REANNOTATION</scope>
    <source>
        <strain>cv. Columbia</strain>
    </source>
</reference>
<reference key="3">
    <citation type="journal article" date="2002" name="Science">
        <title>Functional annotation of a full-length Arabidopsis cDNA collection.</title>
        <authorList>
            <person name="Seki M."/>
            <person name="Narusaka M."/>
            <person name="Kamiya A."/>
            <person name="Ishida J."/>
            <person name="Satou M."/>
            <person name="Sakurai T."/>
            <person name="Nakajima M."/>
            <person name="Enju A."/>
            <person name="Akiyama K."/>
            <person name="Oono Y."/>
            <person name="Muramatsu M."/>
            <person name="Hayashizaki Y."/>
            <person name="Kawai J."/>
            <person name="Carninci P."/>
            <person name="Itoh M."/>
            <person name="Ishii Y."/>
            <person name="Arakawa T."/>
            <person name="Shibata K."/>
            <person name="Shinagawa A."/>
            <person name="Shinozaki K."/>
        </authorList>
    </citation>
    <scope>NUCLEOTIDE SEQUENCE [LARGE SCALE MRNA]</scope>
    <source>
        <strain>cv. Columbia</strain>
    </source>
</reference>
<gene>
    <name type="ordered locus">At1g68190</name>
    <name type="ORF">T22E19.18</name>
</gene>
<keyword id="KW-0479">Metal-binding</keyword>
<keyword id="KW-0539">Nucleus</keyword>
<keyword id="KW-1185">Reference proteome</keyword>
<keyword id="KW-0677">Repeat</keyword>
<keyword id="KW-0862">Zinc</keyword>
<keyword id="KW-0863">Zinc-finger</keyword>
<organism>
    <name type="scientific">Arabidopsis thaliana</name>
    <name type="common">Mouse-ear cress</name>
    <dbReference type="NCBI Taxonomy" id="3702"/>
    <lineage>
        <taxon>Eukaryota</taxon>
        <taxon>Viridiplantae</taxon>
        <taxon>Streptophyta</taxon>
        <taxon>Embryophyta</taxon>
        <taxon>Tracheophyta</taxon>
        <taxon>Spermatophyta</taxon>
        <taxon>Magnoliopsida</taxon>
        <taxon>eudicotyledons</taxon>
        <taxon>Gunneridae</taxon>
        <taxon>Pentapetalae</taxon>
        <taxon>rosids</taxon>
        <taxon>malvids</taxon>
        <taxon>Brassicales</taxon>
        <taxon>Brassicaceae</taxon>
        <taxon>Camelineae</taxon>
        <taxon>Arabidopsis</taxon>
    </lineage>
</organism>